<sequence>METLLSFSAIAVGIIVGLASLGTAIGFALLGGKFLEGAARQPEMAPMLQVKMFIIAGLLDAVPMIGIVIALLFTFANPFVGQLAG</sequence>
<proteinExistence type="inferred from homology"/>
<accession>Q5E1N2</accession>
<keyword id="KW-0066">ATP synthesis</keyword>
<keyword id="KW-0997">Cell inner membrane</keyword>
<keyword id="KW-1003">Cell membrane</keyword>
<keyword id="KW-0138">CF(0)</keyword>
<keyword id="KW-0375">Hydrogen ion transport</keyword>
<keyword id="KW-0406">Ion transport</keyword>
<keyword id="KW-0446">Lipid-binding</keyword>
<keyword id="KW-0472">Membrane</keyword>
<keyword id="KW-1185">Reference proteome</keyword>
<keyword id="KW-0812">Transmembrane</keyword>
<keyword id="KW-1133">Transmembrane helix</keyword>
<keyword id="KW-0813">Transport</keyword>
<feature type="chain" id="PRO_1000184530" description="ATP synthase subunit c">
    <location>
        <begin position="1"/>
        <end position="85"/>
    </location>
</feature>
<feature type="transmembrane region" description="Helical" evidence="1">
    <location>
        <begin position="10"/>
        <end position="30"/>
    </location>
</feature>
<feature type="transmembrane region" description="Helical" evidence="1">
    <location>
        <begin position="53"/>
        <end position="73"/>
    </location>
</feature>
<feature type="site" description="Reversibly protonated during proton transport" evidence="1">
    <location>
        <position position="60"/>
    </location>
</feature>
<dbReference type="EMBL" id="CP000020">
    <property type="protein sequence ID" value="AAW87064.1"/>
    <property type="molecule type" value="Genomic_DNA"/>
</dbReference>
<dbReference type="RefSeq" id="WP_005372317.1">
    <property type="nucleotide sequence ID" value="NZ_CAWLES010000001.1"/>
</dbReference>
<dbReference type="RefSeq" id="YP_205952.1">
    <property type="nucleotide sequence ID" value="NC_006840.2"/>
</dbReference>
<dbReference type="SMR" id="Q5E1N2"/>
<dbReference type="STRING" id="312309.VF_2569"/>
<dbReference type="EnsemblBacteria" id="AAW87064">
    <property type="protein sequence ID" value="AAW87064"/>
    <property type="gene ID" value="VF_2569"/>
</dbReference>
<dbReference type="GeneID" id="96872170"/>
<dbReference type="KEGG" id="vfi:VF_2569"/>
<dbReference type="PATRIC" id="fig|312309.11.peg.2596"/>
<dbReference type="eggNOG" id="ENOG5032S3K">
    <property type="taxonomic scope" value="Bacteria"/>
</dbReference>
<dbReference type="HOGENOM" id="CLU_148047_1_0_6"/>
<dbReference type="OrthoDB" id="9811659at2"/>
<dbReference type="PRO" id="PR:Q5E1N2"/>
<dbReference type="Proteomes" id="UP000000537">
    <property type="component" value="Chromosome I"/>
</dbReference>
<dbReference type="GO" id="GO:0005886">
    <property type="term" value="C:plasma membrane"/>
    <property type="evidence" value="ECO:0007669"/>
    <property type="project" value="UniProtKB-SubCell"/>
</dbReference>
<dbReference type="GO" id="GO:0045259">
    <property type="term" value="C:proton-transporting ATP synthase complex"/>
    <property type="evidence" value="ECO:0007669"/>
    <property type="project" value="UniProtKB-KW"/>
</dbReference>
<dbReference type="GO" id="GO:0033177">
    <property type="term" value="C:proton-transporting two-sector ATPase complex, proton-transporting domain"/>
    <property type="evidence" value="ECO:0007669"/>
    <property type="project" value="InterPro"/>
</dbReference>
<dbReference type="GO" id="GO:0008289">
    <property type="term" value="F:lipid binding"/>
    <property type="evidence" value="ECO:0007669"/>
    <property type="project" value="UniProtKB-KW"/>
</dbReference>
<dbReference type="GO" id="GO:0046933">
    <property type="term" value="F:proton-transporting ATP synthase activity, rotational mechanism"/>
    <property type="evidence" value="ECO:0007669"/>
    <property type="project" value="UniProtKB-UniRule"/>
</dbReference>
<dbReference type="CDD" id="cd18185">
    <property type="entry name" value="ATP-synt_Fo_c_ATPE"/>
    <property type="match status" value="1"/>
</dbReference>
<dbReference type="FunFam" id="1.20.20.10:FF:000002">
    <property type="entry name" value="ATP synthase subunit c"/>
    <property type="match status" value="1"/>
</dbReference>
<dbReference type="Gene3D" id="1.20.20.10">
    <property type="entry name" value="F1F0 ATP synthase subunit C"/>
    <property type="match status" value="1"/>
</dbReference>
<dbReference type="HAMAP" id="MF_01396">
    <property type="entry name" value="ATP_synth_c_bact"/>
    <property type="match status" value="1"/>
</dbReference>
<dbReference type="InterPro" id="IPR005953">
    <property type="entry name" value="ATP_synth_csu_bac/chlpt"/>
</dbReference>
<dbReference type="InterPro" id="IPR000454">
    <property type="entry name" value="ATP_synth_F0_csu"/>
</dbReference>
<dbReference type="InterPro" id="IPR020537">
    <property type="entry name" value="ATP_synth_F0_csu_DDCD_BS"/>
</dbReference>
<dbReference type="InterPro" id="IPR038662">
    <property type="entry name" value="ATP_synth_F0_csu_sf"/>
</dbReference>
<dbReference type="InterPro" id="IPR002379">
    <property type="entry name" value="ATPase_proteolipid_c-like_dom"/>
</dbReference>
<dbReference type="InterPro" id="IPR035921">
    <property type="entry name" value="F/V-ATP_Csub_sf"/>
</dbReference>
<dbReference type="NCBIfam" id="TIGR01260">
    <property type="entry name" value="ATP_synt_c"/>
    <property type="match status" value="1"/>
</dbReference>
<dbReference type="NCBIfam" id="NF005363">
    <property type="entry name" value="PRK06876.1"/>
    <property type="match status" value="1"/>
</dbReference>
<dbReference type="Pfam" id="PF00137">
    <property type="entry name" value="ATP-synt_C"/>
    <property type="match status" value="1"/>
</dbReference>
<dbReference type="PRINTS" id="PR00124">
    <property type="entry name" value="ATPASEC"/>
</dbReference>
<dbReference type="SUPFAM" id="SSF81333">
    <property type="entry name" value="F1F0 ATP synthase subunit C"/>
    <property type="match status" value="1"/>
</dbReference>
<dbReference type="PROSITE" id="PS00605">
    <property type="entry name" value="ATPASE_C"/>
    <property type="match status" value="1"/>
</dbReference>
<comment type="function">
    <text evidence="1">F(1)F(0) ATP synthase produces ATP from ADP in the presence of a proton or sodium gradient. F-type ATPases consist of two structural domains, F(1) containing the extramembraneous catalytic core and F(0) containing the membrane proton channel, linked together by a central stalk and a peripheral stalk. During catalysis, ATP synthesis in the catalytic domain of F(1) is coupled via a rotary mechanism of the central stalk subunits to proton translocation.</text>
</comment>
<comment type="function">
    <text evidence="1">Key component of the F(0) channel; it plays a direct role in translocation across the membrane. A homomeric c-ring of between 10-14 subunits forms the central stalk rotor element with the F(1) delta and epsilon subunits.</text>
</comment>
<comment type="subunit">
    <text evidence="1">F-type ATPases have 2 components, F(1) - the catalytic core - and F(0) - the membrane proton channel. F(1) has five subunits: alpha(3), beta(3), gamma(1), delta(1), epsilon(1). F(0) has three main subunits: a(1), b(2) and c(10-14). The alpha and beta chains form an alternating ring which encloses part of the gamma chain. F(1) is attached to F(0) by a central stalk formed by the gamma and epsilon chains, while a peripheral stalk is formed by the delta and b chains.</text>
</comment>
<comment type="subcellular location">
    <subcellularLocation>
        <location evidence="1">Cell inner membrane</location>
        <topology evidence="1">Multi-pass membrane protein</topology>
    </subcellularLocation>
</comment>
<comment type="similarity">
    <text evidence="1">Belongs to the ATPase C chain family.</text>
</comment>
<name>ATPL_ALIF1</name>
<protein>
    <recommendedName>
        <fullName evidence="1">ATP synthase subunit c</fullName>
    </recommendedName>
    <alternativeName>
        <fullName evidence="1">ATP synthase F(0) sector subunit c</fullName>
    </alternativeName>
    <alternativeName>
        <fullName evidence="1">F-type ATPase subunit c</fullName>
        <shortName evidence="1">F-ATPase subunit c</shortName>
    </alternativeName>
    <alternativeName>
        <fullName evidence="1">Lipid-binding protein</fullName>
    </alternativeName>
</protein>
<organism>
    <name type="scientific">Aliivibrio fischeri (strain ATCC 700601 / ES114)</name>
    <name type="common">Vibrio fischeri</name>
    <dbReference type="NCBI Taxonomy" id="312309"/>
    <lineage>
        <taxon>Bacteria</taxon>
        <taxon>Pseudomonadati</taxon>
        <taxon>Pseudomonadota</taxon>
        <taxon>Gammaproteobacteria</taxon>
        <taxon>Vibrionales</taxon>
        <taxon>Vibrionaceae</taxon>
        <taxon>Aliivibrio</taxon>
    </lineage>
</organism>
<evidence type="ECO:0000255" key="1">
    <source>
        <dbReference type="HAMAP-Rule" id="MF_01396"/>
    </source>
</evidence>
<reference key="1">
    <citation type="journal article" date="2005" name="Proc. Natl. Acad. Sci. U.S.A.">
        <title>Complete genome sequence of Vibrio fischeri: a symbiotic bacterium with pathogenic congeners.</title>
        <authorList>
            <person name="Ruby E.G."/>
            <person name="Urbanowski M."/>
            <person name="Campbell J."/>
            <person name="Dunn A."/>
            <person name="Faini M."/>
            <person name="Gunsalus R."/>
            <person name="Lostroh P."/>
            <person name="Lupp C."/>
            <person name="McCann J."/>
            <person name="Millikan D."/>
            <person name="Schaefer A."/>
            <person name="Stabb E."/>
            <person name="Stevens A."/>
            <person name="Visick K."/>
            <person name="Whistler C."/>
            <person name="Greenberg E.P."/>
        </authorList>
    </citation>
    <scope>NUCLEOTIDE SEQUENCE [LARGE SCALE GENOMIC DNA]</scope>
    <source>
        <strain>ATCC 700601 / ES114</strain>
    </source>
</reference>
<gene>
    <name evidence="1" type="primary">atpE</name>
    <name type="ordered locus">VF_2569</name>
</gene>